<comment type="function">
    <text evidence="1">Plays an important role in the de novo pathway of purine nucleotide biosynthesis. Catalyzes the first committed step in the biosynthesis of AMP from IMP.</text>
</comment>
<comment type="catalytic activity">
    <reaction evidence="1">
        <text>IMP + L-aspartate + GTP = N(6)-(1,2-dicarboxyethyl)-AMP + GDP + phosphate + 2 H(+)</text>
        <dbReference type="Rhea" id="RHEA:15753"/>
        <dbReference type="ChEBI" id="CHEBI:15378"/>
        <dbReference type="ChEBI" id="CHEBI:29991"/>
        <dbReference type="ChEBI" id="CHEBI:37565"/>
        <dbReference type="ChEBI" id="CHEBI:43474"/>
        <dbReference type="ChEBI" id="CHEBI:57567"/>
        <dbReference type="ChEBI" id="CHEBI:58053"/>
        <dbReference type="ChEBI" id="CHEBI:58189"/>
        <dbReference type="EC" id="6.3.4.4"/>
    </reaction>
</comment>
<comment type="cofactor">
    <cofactor evidence="1">
        <name>Mg(2+)</name>
        <dbReference type="ChEBI" id="CHEBI:18420"/>
    </cofactor>
    <text evidence="1">Binds 1 Mg(2+) ion per subunit.</text>
</comment>
<comment type="pathway">
    <text evidence="1">Purine metabolism; AMP biosynthesis via de novo pathway; AMP from IMP: step 1/2.</text>
</comment>
<comment type="subunit">
    <text evidence="1">Homodimer.</text>
</comment>
<comment type="subcellular location">
    <subcellularLocation>
        <location evidence="1">Cytoplasm</location>
    </subcellularLocation>
</comment>
<comment type="similarity">
    <text evidence="1">Belongs to the adenylosuccinate synthetase family.</text>
</comment>
<reference key="1">
    <citation type="journal article" date="2007" name="Nat. Biotechnol.">
        <title>Complete genome sequence of the erythromycin-producing bacterium Saccharopolyspora erythraea NRRL23338.</title>
        <authorList>
            <person name="Oliynyk M."/>
            <person name="Samborskyy M."/>
            <person name="Lester J.B."/>
            <person name="Mironenko T."/>
            <person name="Scott N."/>
            <person name="Dickens S."/>
            <person name="Haydock S.F."/>
            <person name="Leadlay P.F."/>
        </authorList>
    </citation>
    <scope>NUCLEOTIDE SEQUENCE [LARGE SCALE GENOMIC DNA]</scope>
    <source>
        <strain>ATCC 11635 / DSM 40517 / JCM 4748 / NBRC 13426 / NCIMB 8594 / NRRL 2338</strain>
    </source>
</reference>
<accession>A4FQK6</accession>
<keyword id="KW-0963">Cytoplasm</keyword>
<keyword id="KW-0342">GTP-binding</keyword>
<keyword id="KW-0436">Ligase</keyword>
<keyword id="KW-0460">Magnesium</keyword>
<keyword id="KW-0479">Metal-binding</keyword>
<keyword id="KW-0547">Nucleotide-binding</keyword>
<keyword id="KW-0658">Purine biosynthesis</keyword>
<keyword id="KW-1185">Reference proteome</keyword>
<dbReference type="EC" id="6.3.4.4" evidence="1"/>
<dbReference type="EMBL" id="AM420293">
    <property type="protein sequence ID" value="CAM06331.1"/>
    <property type="molecule type" value="Genomic_DNA"/>
</dbReference>
<dbReference type="RefSeq" id="WP_009948760.1">
    <property type="nucleotide sequence ID" value="NC_009142.1"/>
</dbReference>
<dbReference type="SMR" id="A4FQK6"/>
<dbReference type="STRING" id="405948.SACE_7173"/>
<dbReference type="KEGG" id="sen:SACE_7173"/>
<dbReference type="eggNOG" id="COG0104">
    <property type="taxonomic scope" value="Bacteria"/>
</dbReference>
<dbReference type="HOGENOM" id="CLU_029848_0_0_11"/>
<dbReference type="OrthoDB" id="9807553at2"/>
<dbReference type="UniPathway" id="UPA00075">
    <property type="reaction ID" value="UER00335"/>
</dbReference>
<dbReference type="Proteomes" id="UP000006728">
    <property type="component" value="Chromosome"/>
</dbReference>
<dbReference type="GO" id="GO:0005737">
    <property type="term" value="C:cytoplasm"/>
    <property type="evidence" value="ECO:0007669"/>
    <property type="project" value="UniProtKB-SubCell"/>
</dbReference>
<dbReference type="GO" id="GO:0004019">
    <property type="term" value="F:adenylosuccinate synthase activity"/>
    <property type="evidence" value="ECO:0007669"/>
    <property type="project" value="UniProtKB-UniRule"/>
</dbReference>
<dbReference type="GO" id="GO:0005525">
    <property type="term" value="F:GTP binding"/>
    <property type="evidence" value="ECO:0007669"/>
    <property type="project" value="UniProtKB-UniRule"/>
</dbReference>
<dbReference type="GO" id="GO:0000287">
    <property type="term" value="F:magnesium ion binding"/>
    <property type="evidence" value="ECO:0007669"/>
    <property type="project" value="UniProtKB-UniRule"/>
</dbReference>
<dbReference type="GO" id="GO:0044208">
    <property type="term" value="P:'de novo' AMP biosynthetic process"/>
    <property type="evidence" value="ECO:0007669"/>
    <property type="project" value="UniProtKB-UniRule"/>
</dbReference>
<dbReference type="GO" id="GO:0046040">
    <property type="term" value="P:IMP metabolic process"/>
    <property type="evidence" value="ECO:0007669"/>
    <property type="project" value="TreeGrafter"/>
</dbReference>
<dbReference type="CDD" id="cd03108">
    <property type="entry name" value="AdSS"/>
    <property type="match status" value="1"/>
</dbReference>
<dbReference type="FunFam" id="1.10.300.10:FF:000001">
    <property type="entry name" value="Adenylosuccinate synthetase"/>
    <property type="match status" value="1"/>
</dbReference>
<dbReference type="FunFam" id="3.90.170.10:FF:000001">
    <property type="entry name" value="Adenylosuccinate synthetase"/>
    <property type="match status" value="1"/>
</dbReference>
<dbReference type="Gene3D" id="3.40.440.10">
    <property type="entry name" value="Adenylosuccinate Synthetase, subunit A, domain 1"/>
    <property type="match status" value="1"/>
</dbReference>
<dbReference type="Gene3D" id="1.10.300.10">
    <property type="entry name" value="Adenylosuccinate Synthetase, subunit A, domain 2"/>
    <property type="match status" value="1"/>
</dbReference>
<dbReference type="Gene3D" id="3.90.170.10">
    <property type="entry name" value="Adenylosuccinate Synthetase, subunit A, domain 3"/>
    <property type="match status" value="1"/>
</dbReference>
<dbReference type="HAMAP" id="MF_00011">
    <property type="entry name" value="Adenylosucc_synth"/>
    <property type="match status" value="1"/>
</dbReference>
<dbReference type="InterPro" id="IPR018220">
    <property type="entry name" value="Adenylosuccin_syn_GTP-bd"/>
</dbReference>
<dbReference type="InterPro" id="IPR033128">
    <property type="entry name" value="Adenylosuccin_syn_Lys_AS"/>
</dbReference>
<dbReference type="InterPro" id="IPR042109">
    <property type="entry name" value="Adenylosuccinate_synth_dom1"/>
</dbReference>
<dbReference type="InterPro" id="IPR042110">
    <property type="entry name" value="Adenylosuccinate_synth_dom2"/>
</dbReference>
<dbReference type="InterPro" id="IPR042111">
    <property type="entry name" value="Adenylosuccinate_synth_dom3"/>
</dbReference>
<dbReference type="InterPro" id="IPR001114">
    <property type="entry name" value="Adenylosuccinate_synthetase"/>
</dbReference>
<dbReference type="InterPro" id="IPR027417">
    <property type="entry name" value="P-loop_NTPase"/>
</dbReference>
<dbReference type="NCBIfam" id="NF002223">
    <property type="entry name" value="PRK01117.1"/>
    <property type="match status" value="1"/>
</dbReference>
<dbReference type="NCBIfam" id="TIGR00184">
    <property type="entry name" value="purA"/>
    <property type="match status" value="1"/>
</dbReference>
<dbReference type="PANTHER" id="PTHR11846">
    <property type="entry name" value="ADENYLOSUCCINATE SYNTHETASE"/>
    <property type="match status" value="1"/>
</dbReference>
<dbReference type="PANTHER" id="PTHR11846:SF0">
    <property type="entry name" value="ADENYLOSUCCINATE SYNTHETASE"/>
    <property type="match status" value="1"/>
</dbReference>
<dbReference type="Pfam" id="PF00709">
    <property type="entry name" value="Adenylsucc_synt"/>
    <property type="match status" value="1"/>
</dbReference>
<dbReference type="SMART" id="SM00788">
    <property type="entry name" value="Adenylsucc_synt"/>
    <property type="match status" value="1"/>
</dbReference>
<dbReference type="SUPFAM" id="SSF52540">
    <property type="entry name" value="P-loop containing nucleoside triphosphate hydrolases"/>
    <property type="match status" value="1"/>
</dbReference>
<dbReference type="PROSITE" id="PS01266">
    <property type="entry name" value="ADENYLOSUCCIN_SYN_1"/>
    <property type="match status" value="1"/>
</dbReference>
<dbReference type="PROSITE" id="PS00513">
    <property type="entry name" value="ADENYLOSUCCIN_SYN_2"/>
    <property type="match status" value="1"/>
</dbReference>
<name>PURA_SACEN</name>
<evidence type="ECO:0000255" key="1">
    <source>
        <dbReference type="HAMAP-Rule" id="MF_00011"/>
    </source>
</evidence>
<proteinExistence type="inferred from homology"/>
<organism>
    <name type="scientific">Saccharopolyspora erythraea (strain ATCC 11635 / DSM 40517 / JCM 4748 / NBRC 13426 / NCIMB 8594 / NRRL 2338)</name>
    <dbReference type="NCBI Taxonomy" id="405948"/>
    <lineage>
        <taxon>Bacteria</taxon>
        <taxon>Bacillati</taxon>
        <taxon>Actinomycetota</taxon>
        <taxon>Actinomycetes</taxon>
        <taxon>Pseudonocardiales</taxon>
        <taxon>Pseudonocardiaceae</taxon>
        <taxon>Saccharopolyspora</taxon>
    </lineage>
</organism>
<protein>
    <recommendedName>
        <fullName evidence="1">Adenylosuccinate synthetase</fullName>
        <shortName evidence="1">AMPSase</shortName>
        <shortName evidence="1">AdSS</shortName>
        <ecNumber evidence="1">6.3.4.4</ecNumber>
    </recommendedName>
    <alternativeName>
        <fullName evidence="1">IMP--aspartate ligase</fullName>
    </alternativeName>
</protein>
<feature type="chain" id="PRO_1000000914" description="Adenylosuccinate synthetase">
    <location>
        <begin position="1"/>
        <end position="428"/>
    </location>
</feature>
<feature type="active site" description="Proton acceptor" evidence="1">
    <location>
        <position position="13"/>
    </location>
</feature>
<feature type="active site" description="Proton donor" evidence="1">
    <location>
        <position position="41"/>
    </location>
</feature>
<feature type="binding site" evidence="1">
    <location>
        <begin position="12"/>
        <end position="18"/>
    </location>
    <ligand>
        <name>GTP</name>
        <dbReference type="ChEBI" id="CHEBI:37565"/>
    </ligand>
</feature>
<feature type="binding site" description="in other chain" evidence="1">
    <location>
        <begin position="13"/>
        <end position="16"/>
    </location>
    <ligand>
        <name>IMP</name>
        <dbReference type="ChEBI" id="CHEBI:58053"/>
        <note>ligand shared between dimeric partners</note>
    </ligand>
</feature>
<feature type="binding site" evidence="1">
    <location>
        <position position="13"/>
    </location>
    <ligand>
        <name>Mg(2+)</name>
        <dbReference type="ChEBI" id="CHEBI:18420"/>
    </ligand>
</feature>
<feature type="binding site" description="in other chain" evidence="1">
    <location>
        <begin position="38"/>
        <end position="41"/>
    </location>
    <ligand>
        <name>IMP</name>
        <dbReference type="ChEBI" id="CHEBI:58053"/>
        <note>ligand shared between dimeric partners</note>
    </ligand>
</feature>
<feature type="binding site" evidence="1">
    <location>
        <begin position="40"/>
        <end position="42"/>
    </location>
    <ligand>
        <name>GTP</name>
        <dbReference type="ChEBI" id="CHEBI:37565"/>
    </ligand>
</feature>
<feature type="binding site" evidence="1">
    <location>
        <position position="40"/>
    </location>
    <ligand>
        <name>Mg(2+)</name>
        <dbReference type="ChEBI" id="CHEBI:18420"/>
    </ligand>
</feature>
<feature type="binding site" description="in other chain" evidence="1">
    <location>
        <position position="129"/>
    </location>
    <ligand>
        <name>IMP</name>
        <dbReference type="ChEBI" id="CHEBI:58053"/>
        <note>ligand shared between dimeric partners</note>
    </ligand>
</feature>
<feature type="binding site" evidence="1">
    <location>
        <position position="143"/>
    </location>
    <ligand>
        <name>IMP</name>
        <dbReference type="ChEBI" id="CHEBI:58053"/>
        <note>ligand shared between dimeric partners</note>
    </ligand>
</feature>
<feature type="binding site" description="in other chain" evidence="1">
    <location>
        <position position="224"/>
    </location>
    <ligand>
        <name>IMP</name>
        <dbReference type="ChEBI" id="CHEBI:58053"/>
        <note>ligand shared between dimeric partners</note>
    </ligand>
</feature>
<feature type="binding site" description="in other chain" evidence="1">
    <location>
        <position position="239"/>
    </location>
    <ligand>
        <name>IMP</name>
        <dbReference type="ChEBI" id="CHEBI:58053"/>
        <note>ligand shared between dimeric partners</note>
    </ligand>
</feature>
<feature type="binding site" evidence="1">
    <location>
        <begin position="299"/>
        <end position="305"/>
    </location>
    <ligand>
        <name>substrate</name>
    </ligand>
</feature>
<feature type="binding site" description="in other chain" evidence="1">
    <location>
        <position position="303"/>
    </location>
    <ligand>
        <name>IMP</name>
        <dbReference type="ChEBI" id="CHEBI:58053"/>
        <note>ligand shared between dimeric partners</note>
    </ligand>
</feature>
<feature type="binding site" evidence="1">
    <location>
        <position position="305"/>
    </location>
    <ligand>
        <name>GTP</name>
        <dbReference type="ChEBI" id="CHEBI:37565"/>
    </ligand>
</feature>
<feature type="binding site" evidence="1">
    <location>
        <begin position="331"/>
        <end position="333"/>
    </location>
    <ligand>
        <name>GTP</name>
        <dbReference type="ChEBI" id="CHEBI:37565"/>
    </ligand>
</feature>
<feature type="binding site" evidence="1">
    <location>
        <begin position="413"/>
        <end position="415"/>
    </location>
    <ligand>
        <name>GTP</name>
        <dbReference type="ChEBI" id="CHEBI:37565"/>
    </ligand>
</feature>
<gene>
    <name evidence="1" type="primary">purA</name>
    <name type="ordered locus">SACE_7173</name>
</gene>
<sequence>MPAIVLIGAQWGDEGKGKATDLLGEQAQWVVRYQGGNNAGHTVVLPDGQDFALHLIPSGILTPGVTNVIGNGVVVDPGVLLDELAGLEARDIDTNRLLISADAHLIMPYHVAIDRVTERYLGKKQIGTTGRGIGPCYQDKIARVGVRVQDVLDEKILRQKVEAALDIKNQILVKVYNRRGLDVDEVVDTVLGQAEKFAGRIADTKLLINQALDRGETVLLEGSQGTLLDVDHGTYPFVTSSNPTSGGACAGSGIGPTRINGVVGILKAYTTRVGAGPFPTELTDDAGENLRKAGGEFGVTTGRSRRTGWFDAVIARYATRVNGITDYFLTKLDVLTGLQTIPVCVAYDVDGERVTEMPMTQTGVHHAVPVYEELPGWWEDVSGARSFEELPANAQAYVKRLEELSGARISAIGVGPGRDQTIVRHTMA</sequence>